<protein>
    <recommendedName>
        <fullName>Uncharacterized protein KIAA0232</fullName>
    </recommendedName>
</protein>
<name>K0232_MOUSE</name>
<gene>
    <name type="primary">Kiaa0232</name>
    <name type="synonym">D5Ertd579e</name>
</gene>
<dbReference type="EMBL" id="AK033480">
    <property type="protein sequence ID" value="BAC28310.2"/>
    <property type="molecule type" value="mRNA"/>
</dbReference>
<dbReference type="EMBL" id="AK083736">
    <property type="protein sequence ID" value="BAC39009.1"/>
    <property type="molecule type" value="mRNA"/>
</dbReference>
<dbReference type="EMBL" id="AK134363">
    <property type="protein sequence ID" value="BAE22115.1"/>
    <property type="molecule type" value="mRNA"/>
</dbReference>
<dbReference type="EMBL" id="AK139370">
    <property type="protein sequence ID" value="BAE23979.1"/>
    <property type="molecule type" value="mRNA"/>
</dbReference>
<dbReference type="EMBL" id="AK152987">
    <property type="protein sequence ID" value="BAE31635.1"/>
    <property type="molecule type" value="mRNA"/>
</dbReference>
<dbReference type="EMBL" id="CAAA01061871">
    <property type="status" value="NOT_ANNOTATED_CDS"/>
    <property type="molecule type" value="Genomic_DNA"/>
</dbReference>
<dbReference type="EMBL" id="CAAA01088923">
    <property type="status" value="NOT_ANNOTATED_CDS"/>
    <property type="molecule type" value="Genomic_DNA"/>
</dbReference>
<dbReference type="EMBL" id="BC051182">
    <property type="protein sequence ID" value="AAH51182.1"/>
    <property type="molecule type" value="mRNA"/>
</dbReference>
<dbReference type="EMBL" id="BC094673">
    <property type="protein sequence ID" value="AAH94673.1"/>
    <property type="molecule type" value="mRNA"/>
</dbReference>
<dbReference type="EMBL" id="AK122224">
    <property type="protein sequence ID" value="BAC65506.1"/>
    <property type="molecule type" value="mRNA"/>
</dbReference>
<dbReference type="CCDS" id="CCDS39073.2">
    <molecule id="Q80U59-1"/>
</dbReference>
<dbReference type="RefSeq" id="NP_001074701.3">
    <property type="nucleotide sequence ID" value="NM_001081232.3"/>
</dbReference>
<dbReference type="FunCoup" id="Q80U59">
    <property type="interactions" value="109"/>
</dbReference>
<dbReference type="STRING" id="10090.ENSMUSP00000031091"/>
<dbReference type="iPTMnet" id="Q80U59"/>
<dbReference type="PhosphoSitePlus" id="Q80U59"/>
<dbReference type="jPOST" id="Q80U59"/>
<dbReference type="PaxDb" id="10090-ENSMUSP00000031091"/>
<dbReference type="ProteomicsDB" id="301704">
    <molecule id="Q80U59-1"/>
</dbReference>
<dbReference type="ProteomicsDB" id="301705">
    <molecule id="Q80U59-2"/>
</dbReference>
<dbReference type="Antibodypedia" id="51996">
    <property type="antibodies" value="15 antibodies from 6 providers"/>
</dbReference>
<dbReference type="Ensembl" id="ENSMUST00000140653.2">
    <molecule id="Q80U59-3"/>
    <property type="protein sequence ID" value="ENSMUSP00000144240.2"/>
    <property type="gene ID" value="ENSMUSG00000029190.20"/>
</dbReference>
<dbReference type="GeneID" id="320661"/>
<dbReference type="KEGG" id="mmu:320661"/>
<dbReference type="UCSC" id="uc029vhd.2">
    <molecule id="Q80U59-2"/>
    <property type="organism name" value="mouse"/>
</dbReference>
<dbReference type="AGR" id="MGI:1261849"/>
<dbReference type="CTD" id="320661"/>
<dbReference type="MGI" id="MGI:1261849">
    <property type="gene designation" value="D5Ertd579e"/>
</dbReference>
<dbReference type="VEuPathDB" id="HostDB:ENSMUSG00000029190"/>
<dbReference type="eggNOG" id="ENOG502QQF7">
    <property type="taxonomic scope" value="Eukaryota"/>
</dbReference>
<dbReference type="GeneTree" id="ENSGT00390000018549"/>
<dbReference type="InParanoid" id="Q80U59"/>
<dbReference type="OrthoDB" id="3247158at2759"/>
<dbReference type="PhylomeDB" id="Q80U59"/>
<dbReference type="BioGRID-ORCS" id="320661">
    <property type="hits" value="1 hit in 71 CRISPR screens"/>
</dbReference>
<dbReference type="ChiTaRS" id="D5Ertd579e">
    <property type="organism name" value="mouse"/>
</dbReference>
<dbReference type="PRO" id="PR:Q80U59"/>
<dbReference type="Proteomes" id="UP000000589">
    <property type="component" value="Chromosome 5"/>
</dbReference>
<dbReference type="RNAct" id="Q80U59">
    <property type="molecule type" value="protein"/>
</dbReference>
<dbReference type="Bgee" id="ENSMUSG00000029190">
    <property type="expression patterns" value="Expressed in caudate-putamen and 226 other cell types or tissues"/>
</dbReference>
<dbReference type="ExpressionAtlas" id="Q80U59">
    <property type="expression patterns" value="baseline and differential"/>
</dbReference>
<dbReference type="GO" id="GO:0005524">
    <property type="term" value="F:ATP binding"/>
    <property type="evidence" value="ECO:0007669"/>
    <property type="project" value="UniProtKB-KW"/>
</dbReference>
<dbReference type="InterPro" id="IPR027871">
    <property type="entry name" value="DUF4603"/>
</dbReference>
<dbReference type="PANTHER" id="PTHR17611">
    <property type="entry name" value="DNA SEGMENT, CHR 5, ERATO DOI 579, EXPRESSED"/>
    <property type="match status" value="1"/>
</dbReference>
<dbReference type="PANTHER" id="PTHR17611:SF3">
    <property type="entry name" value="DNA SEGMENT, CHR 5, ERATO DOI 579, EXPRESSED"/>
    <property type="match status" value="1"/>
</dbReference>
<dbReference type="Pfam" id="PF15376">
    <property type="entry name" value="DUF4603"/>
    <property type="match status" value="1"/>
</dbReference>
<proteinExistence type="evidence at protein level"/>
<organism>
    <name type="scientific">Mus musculus</name>
    <name type="common">Mouse</name>
    <dbReference type="NCBI Taxonomy" id="10090"/>
    <lineage>
        <taxon>Eukaryota</taxon>
        <taxon>Metazoa</taxon>
        <taxon>Chordata</taxon>
        <taxon>Craniata</taxon>
        <taxon>Vertebrata</taxon>
        <taxon>Euteleostomi</taxon>
        <taxon>Mammalia</taxon>
        <taxon>Eutheria</taxon>
        <taxon>Euarchontoglires</taxon>
        <taxon>Glires</taxon>
        <taxon>Rodentia</taxon>
        <taxon>Myomorpha</taxon>
        <taxon>Muroidea</taxon>
        <taxon>Muridae</taxon>
        <taxon>Murinae</taxon>
        <taxon>Mus</taxon>
        <taxon>Mus</taxon>
    </lineage>
</organism>
<evidence type="ECO:0000250" key="1">
    <source>
        <dbReference type="UniProtKB" id="Q92628"/>
    </source>
</evidence>
<evidence type="ECO:0000255" key="2"/>
<evidence type="ECO:0000256" key="3">
    <source>
        <dbReference type="SAM" id="MobiDB-lite"/>
    </source>
</evidence>
<evidence type="ECO:0000303" key="4">
    <source>
    </source>
</evidence>
<evidence type="ECO:0000303" key="5">
    <source>
    </source>
</evidence>
<evidence type="ECO:0000305" key="6"/>
<evidence type="ECO:0007744" key="7">
    <source>
    </source>
</evidence>
<reference key="1">
    <citation type="journal article" date="2005" name="Science">
        <title>The transcriptional landscape of the mammalian genome.</title>
        <authorList>
            <person name="Carninci P."/>
            <person name="Kasukawa T."/>
            <person name="Katayama S."/>
            <person name="Gough J."/>
            <person name="Frith M.C."/>
            <person name="Maeda N."/>
            <person name="Oyama R."/>
            <person name="Ravasi T."/>
            <person name="Lenhard B."/>
            <person name="Wells C."/>
            <person name="Kodzius R."/>
            <person name="Shimokawa K."/>
            <person name="Bajic V.B."/>
            <person name="Brenner S.E."/>
            <person name="Batalov S."/>
            <person name="Forrest A.R."/>
            <person name="Zavolan M."/>
            <person name="Davis M.J."/>
            <person name="Wilming L.G."/>
            <person name="Aidinis V."/>
            <person name="Allen J.E."/>
            <person name="Ambesi-Impiombato A."/>
            <person name="Apweiler R."/>
            <person name="Aturaliya R.N."/>
            <person name="Bailey T.L."/>
            <person name="Bansal M."/>
            <person name="Baxter L."/>
            <person name="Beisel K.W."/>
            <person name="Bersano T."/>
            <person name="Bono H."/>
            <person name="Chalk A.M."/>
            <person name="Chiu K.P."/>
            <person name="Choudhary V."/>
            <person name="Christoffels A."/>
            <person name="Clutterbuck D.R."/>
            <person name="Crowe M.L."/>
            <person name="Dalla E."/>
            <person name="Dalrymple B.P."/>
            <person name="de Bono B."/>
            <person name="Della Gatta G."/>
            <person name="di Bernardo D."/>
            <person name="Down T."/>
            <person name="Engstrom P."/>
            <person name="Fagiolini M."/>
            <person name="Faulkner G."/>
            <person name="Fletcher C.F."/>
            <person name="Fukushima T."/>
            <person name="Furuno M."/>
            <person name="Futaki S."/>
            <person name="Gariboldi M."/>
            <person name="Georgii-Hemming P."/>
            <person name="Gingeras T.R."/>
            <person name="Gojobori T."/>
            <person name="Green R.E."/>
            <person name="Gustincich S."/>
            <person name="Harbers M."/>
            <person name="Hayashi Y."/>
            <person name="Hensch T.K."/>
            <person name="Hirokawa N."/>
            <person name="Hill D."/>
            <person name="Huminiecki L."/>
            <person name="Iacono M."/>
            <person name="Ikeo K."/>
            <person name="Iwama A."/>
            <person name="Ishikawa T."/>
            <person name="Jakt M."/>
            <person name="Kanapin A."/>
            <person name="Katoh M."/>
            <person name="Kawasawa Y."/>
            <person name="Kelso J."/>
            <person name="Kitamura H."/>
            <person name="Kitano H."/>
            <person name="Kollias G."/>
            <person name="Krishnan S.P."/>
            <person name="Kruger A."/>
            <person name="Kummerfeld S.K."/>
            <person name="Kurochkin I.V."/>
            <person name="Lareau L.F."/>
            <person name="Lazarevic D."/>
            <person name="Lipovich L."/>
            <person name="Liu J."/>
            <person name="Liuni S."/>
            <person name="McWilliam S."/>
            <person name="Madan Babu M."/>
            <person name="Madera M."/>
            <person name="Marchionni L."/>
            <person name="Matsuda H."/>
            <person name="Matsuzawa S."/>
            <person name="Miki H."/>
            <person name="Mignone F."/>
            <person name="Miyake S."/>
            <person name="Morris K."/>
            <person name="Mottagui-Tabar S."/>
            <person name="Mulder N."/>
            <person name="Nakano N."/>
            <person name="Nakauchi H."/>
            <person name="Ng P."/>
            <person name="Nilsson R."/>
            <person name="Nishiguchi S."/>
            <person name="Nishikawa S."/>
            <person name="Nori F."/>
            <person name="Ohara O."/>
            <person name="Okazaki Y."/>
            <person name="Orlando V."/>
            <person name="Pang K.C."/>
            <person name="Pavan W.J."/>
            <person name="Pavesi G."/>
            <person name="Pesole G."/>
            <person name="Petrovsky N."/>
            <person name="Piazza S."/>
            <person name="Reed J."/>
            <person name="Reid J.F."/>
            <person name="Ring B.Z."/>
            <person name="Ringwald M."/>
            <person name="Rost B."/>
            <person name="Ruan Y."/>
            <person name="Salzberg S.L."/>
            <person name="Sandelin A."/>
            <person name="Schneider C."/>
            <person name="Schoenbach C."/>
            <person name="Sekiguchi K."/>
            <person name="Semple C.A."/>
            <person name="Seno S."/>
            <person name="Sessa L."/>
            <person name="Sheng Y."/>
            <person name="Shibata Y."/>
            <person name="Shimada H."/>
            <person name="Shimada K."/>
            <person name="Silva D."/>
            <person name="Sinclair B."/>
            <person name="Sperling S."/>
            <person name="Stupka E."/>
            <person name="Sugiura K."/>
            <person name="Sultana R."/>
            <person name="Takenaka Y."/>
            <person name="Taki K."/>
            <person name="Tammoja K."/>
            <person name="Tan S.L."/>
            <person name="Tang S."/>
            <person name="Taylor M.S."/>
            <person name="Tegner J."/>
            <person name="Teichmann S.A."/>
            <person name="Ueda H.R."/>
            <person name="van Nimwegen E."/>
            <person name="Verardo R."/>
            <person name="Wei C.L."/>
            <person name="Yagi K."/>
            <person name="Yamanishi H."/>
            <person name="Zabarovsky E."/>
            <person name="Zhu S."/>
            <person name="Zimmer A."/>
            <person name="Hide W."/>
            <person name="Bult C."/>
            <person name="Grimmond S.M."/>
            <person name="Teasdale R.D."/>
            <person name="Liu E.T."/>
            <person name="Brusic V."/>
            <person name="Quackenbush J."/>
            <person name="Wahlestedt C."/>
            <person name="Mattick J.S."/>
            <person name="Hume D.A."/>
            <person name="Kai C."/>
            <person name="Sasaki D."/>
            <person name="Tomaru Y."/>
            <person name="Fukuda S."/>
            <person name="Kanamori-Katayama M."/>
            <person name="Suzuki M."/>
            <person name="Aoki J."/>
            <person name="Arakawa T."/>
            <person name="Iida J."/>
            <person name="Imamura K."/>
            <person name="Itoh M."/>
            <person name="Kato T."/>
            <person name="Kawaji H."/>
            <person name="Kawagashira N."/>
            <person name="Kawashima T."/>
            <person name="Kojima M."/>
            <person name="Kondo S."/>
            <person name="Konno H."/>
            <person name="Nakano K."/>
            <person name="Ninomiya N."/>
            <person name="Nishio T."/>
            <person name="Okada M."/>
            <person name="Plessy C."/>
            <person name="Shibata K."/>
            <person name="Shiraki T."/>
            <person name="Suzuki S."/>
            <person name="Tagami M."/>
            <person name="Waki K."/>
            <person name="Watahiki A."/>
            <person name="Okamura-Oho Y."/>
            <person name="Suzuki H."/>
            <person name="Kawai J."/>
            <person name="Hayashizaki Y."/>
        </authorList>
    </citation>
    <scope>NUCLEOTIDE SEQUENCE [LARGE SCALE MRNA] (ISOFORM 2)</scope>
    <scope>NUCLEOTIDE SEQUENCE [LARGE SCALE MRNA] OF 1-1276 (ISOFORM 1)</scope>
    <source>
        <strain>C57BL/6J</strain>
        <tissue>Bone marrow</tissue>
        <tissue>Brain cortex</tissue>
        <tissue>Colon</tissue>
        <tissue>Testis</tissue>
    </source>
</reference>
<reference key="2">
    <citation type="journal article" date="2009" name="PLoS Biol.">
        <title>Lineage-specific biology revealed by a finished genome assembly of the mouse.</title>
        <authorList>
            <person name="Church D.M."/>
            <person name="Goodstadt L."/>
            <person name="Hillier L.W."/>
            <person name="Zody M.C."/>
            <person name="Goldstein S."/>
            <person name="She X."/>
            <person name="Bult C.J."/>
            <person name="Agarwala R."/>
            <person name="Cherry J.L."/>
            <person name="DiCuccio M."/>
            <person name="Hlavina W."/>
            <person name="Kapustin Y."/>
            <person name="Meric P."/>
            <person name="Maglott D."/>
            <person name="Birtle Z."/>
            <person name="Marques A.C."/>
            <person name="Graves T."/>
            <person name="Zhou S."/>
            <person name="Teague B."/>
            <person name="Potamousis K."/>
            <person name="Churas C."/>
            <person name="Place M."/>
            <person name="Herschleb J."/>
            <person name="Runnheim R."/>
            <person name="Forrest D."/>
            <person name="Amos-Landgraf J."/>
            <person name="Schwartz D.C."/>
            <person name="Cheng Z."/>
            <person name="Lindblad-Toh K."/>
            <person name="Eichler E.E."/>
            <person name="Ponting C.P."/>
        </authorList>
    </citation>
    <scope>NUCLEOTIDE SEQUENCE [LARGE SCALE GENOMIC DNA]</scope>
    <source>
        <strain>C57BL/6J</strain>
    </source>
</reference>
<reference key="3">
    <citation type="journal article" date="2004" name="Genome Res.">
        <title>The status, quality, and expansion of the NIH full-length cDNA project: the Mammalian Gene Collection (MGC).</title>
        <authorList>
            <consortium name="The MGC Project Team"/>
        </authorList>
    </citation>
    <scope>NUCLEOTIDE SEQUENCE [LARGE SCALE MRNA] (ISOFORM 3)</scope>
    <scope>NUCLEOTIDE SEQUENCE [LARGE SCALE MRNA] OF 347-1396 (ISOFORM 1)</scope>
    <source>
        <strain>C57BL/6J</strain>
        <strain>FVB/N</strain>
        <tissue>Brain</tissue>
        <tissue>Colon</tissue>
    </source>
</reference>
<reference key="4">
    <citation type="journal article" date="2003" name="DNA Res.">
        <title>Prediction of the coding sequences of mouse homologues of KIAA gene: II. The complete nucleotide sequences of 400 mouse KIAA-homologous cDNAs identified by screening of terminal sequences of cDNA clones randomly sampled from size-fractionated libraries.</title>
        <authorList>
            <person name="Okazaki N."/>
            <person name="Kikuno R."/>
            <person name="Ohara R."/>
            <person name="Inamoto S."/>
            <person name="Aizawa H."/>
            <person name="Yuasa S."/>
            <person name="Nakajima D."/>
            <person name="Nagase T."/>
            <person name="Ohara O."/>
            <person name="Koga H."/>
        </authorList>
    </citation>
    <scope>NUCLEOTIDE SEQUENCE [LARGE SCALE MRNA] OF 21-1396 (ISOFORM 1)</scope>
    <source>
        <tissue>Brain</tissue>
    </source>
</reference>
<reference key="5">
    <citation type="journal article" date="2010" name="Cell">
        <title>A tissue-specific atlas of mouse protein phosphorylation and expression.</title>
        <authorList>
            <person name="Huttlin E.L."/>
            <person name="Jedrychowski M.P."/>
            <person name="Elias J.E."/>
            <person name="Goswami T."/>
            <person name="Rad R."/>
            <person name="Beausoleil S.A."/>
            <person name="Villen J."/>
            <person name="Haas W."/>
            <person name="Sowa M.E."/>
            <person name="Gygi S.P."/>
        </authorList>
    </citation>
    <scope>PHOSPHORYLATION [LARGE SCALE ANALYSIS] AT SER-1197</scope>
    <scope>IDENTIFICATION BY MASS SPECTROMETRY [LARGE SCALE ANALYSIS]</scope>
    <source>
        <tissue>Brain</tissue>
    </source>
</reference>
<feature type="chain" id="PRO_0000261138" description="Uncharacterized protein KIAA0232">
    <location>
        <begin position="1"/>
        <end position="1396"/>
    </location>
</feature>
<feature type="region of interest" description="Disordered" evidence="3">
    <location>
        <begin position="146"/>
        <end position="165"/>
    </location>
</feature>
<feature type="region of interest" description="Disordered" evidence="3">
    <location>
        <begin position="198"/>
        <end position="388"/>
    </location>
</feature>
<feature type="region of interest" description="Disordered" evidence="3">
    <location>
        <begin position="1113"/>
        <end position="1137"/>
    </location>
</feature>
<feature type="region of interest" description="Disordered" evidence="3">
    <location>
        <begin position="1347"/>
        <end position="1396"/>
    </location>
</feature>
<feature type="compositionally biased region" description="Low complexity" evidence="3">
    <location>
        <begin position="198"/>
        <end position="221"/>
    </location>
</feature>
<feature type="compositionally biased region" description="Basic and acidic residues" evidence="3">
    <location>
        <begin position="242"/>
        <end position="268"/>
    </location>
</feature>
<feature type="compositionally biased region" description="Low complexity" evidence="3">
    <location>
        <begin position="286"/>
        <end position="300"/>
    </location>
</feature>
<feature type="compositionally biased region" description="Basic residues" evidence="3">
    <location>
        <begin position="312"/>
        <end position="327"/>
    </location>
</feature>
<feature type="compositionally biased region" description="Low complexity" evidence="3">
    <location>
        <begin position="1365"/>
        <end position="1376"/>
    </location>
</feature>
<feature type="compositionally biased region" description="Basic and acidic residues" evidence="3">
    <location>
        <begin position="1386"/>
        <end position="1396"/>
    </location>
</feature>
<feature type="binding site" evidence="2">
    <location>
        <begin position="88"/>
        <end position="95"/>
    </location>
    <ligand>
        <name>ATP</name>
        <dbReference type="ChEBI" id="CHEBI:30616"/>
    </ligand>
</feature>
<feature type="modified residue" description="Phosphoserine" evidence="1">
    <location>
        <position position="817"/>
    </location>
</feature>
<feature type="modified residue" description="Phosphoserine" evidence="1">
    <location>
        <position position="1083"/>
    </location>
</feature>
<feature type="modified residue" description="Phosphoserine" evidence="7">
    <location>
        <position position="1197"/>
    </location>
</feature>
<feature type="modified residue" description="Phosphoserine" evidence="1">
    <location>
        <position position="1339"/>
    </location>
</feature>
<feature type="splice variant" id="VSP_021647" description="In isoform 3." evidence="4">
    <original>ENDILS</original>
    <variation>VGIDAC</variation>
    <location>
        <begin position="78"/>
        <end position="83"/>
    </location>
</feature>
<feature type="splice variant" id="VSP_021648" description="In isoform 3." evidence="4">
    <location>
        <begin position="84"/>
        <end position="1396"/>
    </location>
</feature>
<feature type="splice variant" id="VSP_021649" description="In isoform 2." evidence="5">
    <original>YEAFPPLSEKPVCLQEIMTVWNKSKPCSYSS</original>
    <variation>VRLLSLKYVLLKPVSLLPHGFHFCHLYDFLI</variation>
    <location>
        <begin position="174"/>
        <end position="204"/>
    </location>
</feature>
<feature type="splice variant" id="VSP_021650" description="In isoform 2." evidence="5">
    <location>
        <begin position="205"/>
        <end position="1396"/>
    </location>
</feature>
<feature type="sequence conflict" description="In Ref. 1; BAC39009." evidence="6" ref="1">
    <original>M</original>
    <variation>V</variation>
    <location>
        <position position="107"/>
    </location>
</feature>
<feature type="sequence conflict" description="In Ref. 1; BAC28310." evidence="6" ref="1">
    <original>S</original>
    <variation>C</variation>
    <location>
        <position position="356"/>
    </location>
</feature>
<feature type="sequence conflict" description="In Ref. 1; BAE22115." evidence="6" ref="1">
    <original>I</original>
    <variation>F</variation>
    <location>
        <position position="409"/>
    </location>
</feature>
<feature type="sequence conflict" description="In Ref. 1; BAE23979 and 3; AAH94673." evidence="6" ref="1 3">
    <original>R</original>
    <variation>S</variation>
    <location>
        <position position="1007"/>
    </location>
</feature>
<feature type="sequence conflict" description="In Ref. 1; BAE23979 and 3; AAH94673." evidence="6" ref="1 3">
    <original>H</original>
    <variation>Q</variation>
    <location>
        <position position="1143"/>
    </location>
</feature>
<comment type="alternative products">
    <event type="alternative splicing"/>
    <isoform>
        <id>Q80U59-1</id>
        <name>1</name>
        <sequence type="displayed"/>
    </isoform>
    <isoform>
        <id>Q80U59-2</id>
        <name>2</name>
        <sequence type="described" ref="VSP_021649 VSP_021650"/>
    </isoform>
    <isoform>
        <id>Q80U59-3</id>
        <name>3</name>
        <sequence type="described" ref="VSP_021647 VSP_021648"/>
    </isoform>
</comment>
<sequence>MRPVCTVVVDGLPSESTSSSYPGPVSVSDMSLLHALGPVQTWLGQELEKCGIDAMIYSRYILSLLLHDSYDYDLQEQENDILSWEKGAYKKWGRSKKKCSDLTLEEMKKQAAVQCLRSASDESSGIETLVEELCCRLKDLQSEQEEKIHKKLEGSPSPEEELSPTAKDQVEMYYEAFPPLSEKPVCLQEIMTVWNKSKPCSYSSSSSSSTVPPASTDTSSPKDCNSESEAVRERSSVASVPMHEKAQSRSRHEKESKLSSSTIEEKPAFYKRQIRHKPEGKTRPRSWSSGSSEAGSSSSGNQGELKASMKYVKVRHKAREIRNRKGRNGQNRHSLKHCGKAERGVHAGSGGSSSSSSNGSIRQLCKRGKRPAKETGRSDSGNTAVKDLYVDSRNNKEYKEEPLWYTEPIAEYFVPLSRKSKLETTYRNREDTSTLTAEAVEDLSDSVRGLCISNSNIHRTYLAAGTFIDGHFVEMPAVINEDIDLAGTSLCSLPEDNKYLDDIHLSELTHFYEVDIDQSMLDPGASETMQGESRILNMIRQKSKENTDFEAECCIVLDGMELQGERAIWTDSTSSVGAEGFFLQDLGNLAQFWECCSSSSGDADGESFGGDSPVRLSPILDSTMLSSHILAGNQEPFSNINEGSGINSCFSVFEVQCSNSVLPFSFETLNLGSEHADSSANMLGKTQSRLLIWTKNSAFEENEHCSNLSTRTCSPWSHSEEARSDNETLNIQFEESTQFTAEDINYVVPRVSSDFVDEELLDFLQDETCQQNSRTLGEIPTLVFKKRSKLESVCGIQLEQKAESKNFETTHACSESSPHGDGYSSGVIKDIWTKMVGRSSVAAVETERTGEELFSTDVNNYCCCLDTEAKMEALQEPSRAVQRSEYHLWEGQKENMEKRAFVSSELSKVDGGDYTTPSKPWDVAQDKENTFILGGVYGELKTFNSDGEWAVVPPGHTKGSLLQCAASDVVTIAGTDVFMTPGNSFAPGHRQLWKPFVSFEQSDMPKRGENGVNKGFSFIFHEDLLGACSNFQVEDPGLEYSLSSFDLSNPFSQVLHVECSFEPEGIASFSPSFKPKSILCSDSDSEVFHPRICGVERTQYRAIRISPRTHFRPISASELSPGGGSESEFESEKDEASVPIPSHVDVFEDPQADLKPLEEDAEKEGHYYGKLELESGKFLPRLKKSGMEKSAQTSLDSQEEATGILPKQNQCLECNFNESLEINLESSAANCKIMTQCEEEMSEFCSCKAGCQFPACEDNPVSSGQLEEFPVLNTDVQEVTRNQEKQSWWEKALYSPLFPTSECEECYTNAKGENGIEECPDAKETPSREERLLDFNRVSSVYEARCTGERGSETKPNGLHRKMCSSASSDTGDTGSEAGGEWVGPSREELFSRTHL</sequence>
<accession>Q80U59</accession>
<accession>Q3U6T9</accession>
<accession>Q3UTK1</accession>
<accession>Q3UYU6</accession>
<accession>Q504Z4</accession>
<accession>Q80XC4</accession>
<accession>Q8BJI7</accession>
<accession>Q8BZV3</accession>
<keyword id="KW-0025">Alternative splicing</keyword>
<keyword id="KW-0067">ATP-binding</keyword>
<keyword id="KW-0547">Nucleotide-binding</keyword>
<keyword id="KW-0597">Phosphoprotein</keyword>
<keyword id="KW-1185">Reference proteome</keyword>